<feature type="signal peptide" evidence="1">
    <location>
        <begin position="1"/>
        <end position="34"/>
    </location>
</feature>
<feature type="chain" id="PRO_5004316651" description="Cell wall protein Lmo0130" evidence="1">
    <location>
        <begin position="35"/>
        <end position="784"/>
    </location>
</feature>
<feature type="propeptide" id="PRO_0000445902" description="Removed by sortase A" evidence="2 4 9 10">
    <location>
        <begin position="759"/>
        <end position="784"/>
    </location>
</feature>
<feature type="region of interest" description="Disordered" evidence="3">
    <location>
        <begin position="690"/>
        <end position="761"/>
    </location>
</feature>
<feature type="short sequence motif" description="LPXTG sorting signal" evidence="2">
    <location>
        <begin position="755"/>
        <end position="759"/>
    </location>
</feature>
<feature type="compositionally biased region" description="Gly residues" evidence="3">
    <location>
        <begin position="697"/>
        <end position="729"/>
    </location>
</feature>
<feature type="compositionally biased region" description="Low complexity" evidence="3">
    <location>
        <begin position="730"/>
        <end position="759"/>
    </location>
</feature>
<feature type="modified residue" description="Pentaglycyl murein peptidoglycan amidated threonine" evidence="2 8">
    <location>
        <position position="758"/>
    </location>
</feature>
<keyword id="KW-0134">Cell wall</keyword>
<keyword id="KW-0903">Direct protein sequencing</keyword>
<keyword id="KW-0572">Peptidoglycan-anchor</keyword>
<keyword id="KW-1185">Reference proteome</keyword>
<keyword id="KW-0964">Secreted</keyword>
<keyword id="KW-0732">Signal</keyword>
<sequence>MKVNKFFKKTTHVLLVAGLTIGLTAPFTGTTAQAAADTVPIQILGINDFHGALETASKDASGSPIGGADYLATNLDNATNSFLQANPGATTDNAIRVQAGDMVGASPAVSGLLQDEPTMKVLQKMNFEVGTLGNHEFDEGLPEYKRILDGVSTNKFGPIVEAYPRVKSDMKIVAANVVNKGTNTVAEGFLPYYVKEIDGVKVGFIGIVTTEIPNLVLANHIKDYDFLDEAETIVKYSAELRGQGVNAIVVLSHVPALSTGNPNTGTKQDVAGEAANMMTKANELDPNNSVDLVLAGHNHQYTNGLVGKTRIVQSYNNGKAFSDVTGELDKTTGDFVSPPDAKITYNTRSVTPNADITAVTEDAKSRIEGVINETIGLANKDVISRDTNPDNKAIDDKESELGNMITDAQRYMANKAGADVDFAMTNNGGIRSDLTTRLANGQNEITWGAAQAVQPFGNILQVVEMTGADILEALNQQYLSNQTYFLQISGLKYTFTDTDDLDHAYKVASVTTEDGTPLKTDQKYKVVINDFLFGGGDGFSAFKKANLVTAIDPDTETFINYIKDQKAAGKVITAQKEGRKVYKSQAEIDKETKDAAIKAIKEATKINKLAEKDKTLTGTTLPGATVSVQKATANARMALAAGPNATADANGKFSVDVTSLNLKKGDQITTTITDPNGYSTTFQATVQAAATTPPDNGNGGTDNGNGNGNNGGTDGNGGTNNGNGSGTNGGTTTTEDPTTTTSNTSTTGTSSNTSLPTTGDTAGLATVFGVILTTTALYVLRKRS</sequence>
<dbReference type="EMBL" id="AL591973">
    <property type="protein sequence ID" value="CAC98345.1"/>
    <property type="molecule type" value="Genomic_DNA"/>
</dbReference>
<dbReference type="PIR" id="AC1091">
    <property type="entry name" value="AC1091"/>
</dbReference>
<dbReference type="RefSeq" id="NP_463663.1">
    <property type="nucleotide sequence ID" value="NC_003210.1"/>
</dbReference>
<dbReference type="RefSeq" id="WP_010989350.1">
    <property type="nucleotide sequence ID" value="NC_003210.1"/>
</dbReference>
<dbReference type="SMR" id="Q8YAJ5"/>
<dbReference type="STRING" id="169963.gene:17592766"/>
<dbReference type="PaxDb" id="169963-lmo0130"/>
<dbReference type="EnsemblBacteria" id="CAC98345">
    <property type="protein sequence ID" value="CAC98345"/>
    <property type="gene ID" value="CAC98345"/>
</dbReference>
<dbReference type="GeneID" id="986721"/>
<dbReference type="KEGG" id="lmo:lmo0130"/>
<dbReference type="PATRIC" id="fig|169963.11.peg.133"/>
<dbReference type="eggNOG" id="COG0737">
    <property type="taxonomic scope" value="Bacteria"/>
</dbReference>
<dbReference type="HOGENOM" id="CLU_005854_5_1_9"/>
<dbReference type="OrthoDB" id="9775118at2"/>
<dbReference type="PhylomeDB" id="Q8YAJ5"/>
<dbReference type="BioCyc" id="LMON169963:LMO0130-MONOMER"/>
<dbReference type="Proteomes" id="UP000000817">
    <property type="component" value="Chromosome"/>
</dbReference>
<dbReference type="GO" id="GO:0005576">
    <property type="term" value="C:extracellular region"/>
    <property type="evidence" value="ECO:0007669"/>
    <property type="project" value="UniProtKB-KW"/>
</dbReference>
<dbReference type="GO" id="GO:0030288">
    <property type="term" value="C:outer membrane-bounded periplasmic space"/>
    <property type="evidence" value="ECO:0000318"/>
    <property type="project" value="GO_Central"/>
</dbReference>
<dbReference type="GO" id="GO:0008253">
    <property type="term" value="F:5'-nucleotidase activity"/>
    <property type="evidence" value="ECO:0000318"/>
    <property type="project" value="GO_Central"/>
</dbReference>
<dbReference type="GO" id="GO:0046872">
    <property type="term" value="F:metal ion binding"/>
    <property type="evidence" value="ECO:0007669"/>
    <property type="project" value="InterPro"/>
</dbReference>
<dbReference type="GO" id="GO:0000166">
    <property type="term" value="F:nucleotide binding"/>
    <property type="evidence" value="ECO:0007669"/>
    <property type="project" value="InterPro"/>
</dbReference>
<dbReference type="GO" id="GO:0008768">
    <property type="term" value="F:UDP-sugar diphosphatase activity"/>
    <property type="evidence" value="ECO:0000318"/>
    <property type="project" value="GO_Central"/>
</dbReference>
<dbReference type="GO" id="GO:0009166">
    <property type="term" value="P:nucleotide catabolic process"/>
    <property type="evidence" value="ECO:0007669"/>
    <property type="project" value="InterPro"/>
</dbReference>
<dbReference type="FunFam" id="3.60.21.10:FF:000052">
    <property type="entry name" value="Endonuclease YhcR"/>
    <property type="match status" value="1"/>
</dbReference>
<dbReference type="FunFam" id="3.90.780.10:FF:000004">
    <property type="entry name" value="UDP-sugar hydrolase, putative"/>
    <property type="match status" value="1"/>
</dbReference>
<dbReference type="Gene3D" id="3.60.21.10">
    <property type="match status" value="1"/>
</dbReference>
<dbReference type="Gene3D" id="3.90.780.10">
    <property type="entry name" value="5'-Nucleotidase, C-terminal domain"/>
    <property type="match status" value="1"/>
</dbReference>
<dbReference type="InterPro" id="IPR008334">
    <property type="entry name" value="5'-Nucleotdase_C"/>
</dbReference>
<dbReference type="InterPro" id="IPR036907">
    <property type="entry name" value="5'-Nucleotdase_C_sf"/>
</dbReference>
<dbReference type="InterPro" id="IPR006146">
    <property type="entry name" value="5'-Nucleotdase_CS"/>
</dbReference>
<dbReference type="InterPro" id="IPR006179">
    <property type="entry name" value="5_nucleotidase/apyrase"/>
</dbReference>
<dbReference type="InterPro" id="IPR041498">
    <property type="entry name" value="Big_6"/>
</dbReference>
<dbReference type="InterPro" id="IPR004843">
    <property type="entry name" value="Calcineurin-like_PHP_ApaH"/>
</dbReference>
<dbReference type="InterPro" id="IPR029052">
    <property type="entry name" value="Metallo-depent_PP-like"/>
</dbReference>
<dbReference type="NCBIfam" id="TIGR01167">
    <property type="entry name" value="LPXTG_anchor"/>
    <property type="match status" value="1"/>
</dbReference>
<dbReference type="PANTHER" id="PTHR11575:SF24">
    <property type="entry name" value="5'-NUCLEOTIDASE"/>
    <property type="match status" value="1"/>
</dbReference>
<dbReference type="PANTHER" id="PTHR11575">
    <property type="entry name" value="5'-NUCLEOTIDASE-RELATED"/>
    <property type="match status" value="1"/>
</dbReference>
<dbReference type="Pfam" id="PF02872">
    <property type="entry name" value="5_nucleotid_C"/>
    <property type="match status" value="1"/>
</dbReference>
<dbReference type="Pfam" id="PF17936">
    <property type="entry name" value="Big_6"/>
    <property type="match status" value="1"/>
</dbReference>
<dbReference type="Pfam" id="PF00149">
    <property type="entry name" value="Metallophos"/>
    <property type="match status" value="1"/>
</dbReference>
<dbReference type="PRINTS" id="PR01607">
    <property type="entry name" value="APYRASEFAMLY"/>
</dbReference>
<dbReference type="SUPFAM" id="SSF55816">
    <property type="entry name" value="5'-nucleotidase (syn. UDP-sugar hydrolase), C-terminal domain"/>
    <property type="match status" value="1"/>
</dbReference>
<dbReference type="SUPFAM" id="SSF56300">
    <property type="entry name" value="Metallo-dependent phosphatases"/>
    <property type="match status" value="1"/>
</dbReference>
<dbReference type="PROSITE" id="PS00786">
    <property type="entry name" value="5_NUCLEOTIDASE_2"/>
    <property type="match status" value="1"/>
</dbReference>
<protein>
    <recommendedName>
        <fullName evidence="7">Cell wall protein Lmo0130</fullName>
    </recommendedName>
</protein>
<proteinExistence type="evidence at protein level"/>
<gene>
    <name type="ordered locus">lmo0130</name>
</gene>
<reference key="1">
    <citation type="journal article" date="2001" name="Science">
        <title>Comparative genomics of Listeria species.</title>
        <authorList>
            <person name="Glaser P."/>
            <person name="Frangeul L."/>
            <person name="Buchrieser C."/>
            <person name="Rusniok C."/>
            <person name="Amend A."/>
            <person name="Baquero F."/>
            <person name="Berche P."/>
            <person name="Bloecker H."/>
            <person name="Brandt P."/>
            <person name="Chakraborty T."/>
            <person name="Charbit A."/>
            <person name="Chetouani F."/>
            <person name="Couve E."/>
            <person name="de Daruvar A."/>
            <person name="Dehoux P."/>
            <person name="Domann E."/>
            <person name="Dominguez-Bernal G."/>
            <person name="Duchaud E."/>
            <person name="Durant L."/>
            <person name="Dussurget O."/>
            <person name="Entian K.-D."/>
            <person name="Fsihi H."/>
            <person name="Garcia-del Portillo F."/>
            <person name="Garrido P."/>
            <person name="Gautier L."/>
            <person name="Goebel W."/>
            <person name="Gomez-Lopez N."/>
            <person name="Hain T."/>
            <person name="Hauf J."/>
            <person name="Jackson D."/>
            <person name="Jones L.-M."/>
            <person name="Kaerst U."/>
            <person name="Kreft J."/>
            <person name="Kuhn M."/>
            <person name="Kunst F."/>
            <person name="Kurapkat G."/>
            <person name="Madueno E."/>
            <person name="Maitournam A."/>
            <person name="Mata Vicente J."/>
            <person name="Ng E."/>
            <person name="Nedjari H."/>
            <person name="Nordsiek G."/>
            <person name="Novella S."/>
            <person name="de Pablos B."/>
            <person name="Perez-Diaz J.-C."/>
            <person name="Purcell R."/>
            <person name="Remmel B."/>
            <person name="Rose M."/>
            <person name="Schlueter T."/>
            <person name="Simoes N."/>
            <person name="Tierrez A."/>
            <person name="Vazquez-Boland J.-A."/>
            <person name="Voss H."/>
            <person name="Wehland J."/>
            <person name="Cossart P."/>
        </authorList>
    </citation>
    <scope>NUCLEOTIDE SEQUENCE [LARGE SCALE GENOMIC DNA]</scope>
    <source>
        <strain>ATCC BAA-679 / EGD-e</strain>
    </source>
</reference>
<reference key="2">
    <citation type="journal article" date="2002" name="Mol. Microbiol.">
        <title>Inactivation of the srtA gene in Listeria monocytogenes inhibits anchoring of surface proteins and affects virulence.</title>
        <authorList>
            <person name="Bierne H."/>
            <person name="Mazmanian S.K."/>
            <person name="Trost M."/>
            <person name="Pucciarelli M.G."/>
            <person name="Liu G."/>
            <person name="Dehoux P."/>
            <person name="Jansch L."/>
            <person name="Garcia-del Portillo F."/>
            <person name="Schneewind O."/>
            <person name="Cossart P."/>
        </authorList>
    </citation>
    <scope>PROTEIN SEQUENCE OF 156-165; 181-195 AND 349-364</scope>
    <scope>PROCESSING BY SRTA</scope>
    <scope>SUBCELLULAR LOCATION</scope>
    <source>
        <strain>ATCC BAA-679 / EGD-e</strain>
    </source>
</reference>
<reference key="3">
    <citation type="journal article" date="2005" name="Proteomics">
        <title>Identification of substrates of the Listeria monocytogenes sortases A and B by a non-gel proteomic analysis.</title>
        <authorList>
            <person name="Pucciarelli M.G."/>
            <person name="Calvo E."/>
            <person name="Sabet C."/>
            <person name="Bierne H."/>
            <person name="Cossart P."/>
            <person name="Garcia-del Portillo F."/>
        </authorList>
    </citation>
    <scope>IDENTIFICATION BY MASS SPECTROMETRY</scope>
    <scope>INDUCTION</scope>
    <scope>PROCESSING BY SRTA</scope>
    <source>
        <strain>ATCC BAA-679 / EGD-e</strain>
    </source>
</reference>
<reference key="4">
    <citation type="journal article" date="2012" name="Int. Microbiol.">
        <title>Contribution of sortase A to the regulation of Listeria monocytogenes LPXTG surface proteins.</title>
        <authorList>
            <person name="Mariscotti J.F."/>
            <person name="Quereda J.J."/>
            <person name="Pucciarelli M.G."/>
        </authorList>
    </citation>
    <scope>SUBCELLULAR LOCATION</scope>
    <scope>PROCESSING BY SRTA</scope>
    <source>
        <strain>ATCC BAA-679 / EGD-e</strain>
    </source>
</reference>
<accession>Q8YAJ5</accession>
<name>Y130_LISMO</name>
<comment type="subcellular location">
    <subcellularLocation>
        <location evidence="2 4 5 6">Secreted</location>
        <location evidence="2 4 5 6">Cell wall</location>
        <topology evidence="2 4 5">Peptidoglycan-anchor</topology>
    </subcellularLocation>
    <text evidence="6">In the absence of SrtA in exponential phase some protein is still anchored to the cell wall while a very small amount is secreted, in stationary phase almost no protein accumulates; protein levels decrease in the srtA mutant, suggesting post-transcriptional regulation that involves SrtA.</text>
</comment>
<comment type="induction">
    <text evidence="5">Present in both exponential and stationary phase (at protein level).</text>
</comment>
<organism>
    <name type="scientific">Listeria monocytogenes serovar 1/2a (strain ATCC BAA-679 / EGD-e)</name>
    <dbReference type="NCBI Taxonomy" id="169963"/>
    <lineage>
        <taxon>Bacteria</taxon>
        <taxon>Bacillati</taxon>
        <taxon>Bacillota</taxon>
        <taxon>Bacilli</taxon>
        <taxon>Bacillales</taxon>
        <taxon>Listeriaceae</taxon>
        <taxon>Listeria</taxon>
    </lineage>
</organism>
<evidence type="ECO:0000255" key="1"/>
<evidence type="ECO:0000255" key="2">
    <source>
        <dbReference type="PROSITE-ProRule" id="PRU00477"/>
    </source>
</evidence>
<evidence type="ECO:0000256" key="3">
    <source>
        <dbReference type="SAM" id="MobiDB-lite"/>
    </source>
</evidence>
<evidence type="ECO:0000269" key="4">
    <source>
    </source>
</evidence>
<evidence type="ECO:0000269" key="5">
    <source>
    </source>
</evidence>
<evidence type="ECO:0000269" key="6">
    <source>
    </source>
</evidence>
<evidence type="ECO:0000305" key="7"/>
<evidence type="ECO:0000305" key="8">
    <source>
    </source>
</evidence>
<evidence type="ECO:0000305" key="9">
    <source>
    </source>
</evidence>
<evidence type="ECO:0000305" key="10">
    <source>
    </source>
</evidence>